<evidence type="ECO:0000255" key="1">
    <source>
        <dbReference type="HAMAP-Rule" id="MF_00531"/>
    </source>
</evidence>
<evidence type="ECO:0000305" key="2"/>
<accession>C4Z2T4</accession>
<organism>
    <name type="scientific">Lachnospira eligens (strain ATCC 27750 / DSM 3376 / VPI C15-48 / C15-B4)</name>
    <name type="common">Eubacterium eligens</name>
    <dbReference type="NCBI Taxonomy" id="515620"/>
    <lineage>
        <taxon>Bacteria</taxon>
        <taxon>Bacillati</taxon>
        <taxon>Bacillota</taxon>
        <taxon>Clostridia</taxon>
        <taxon>Lachnospirales</taxon>
        <taxon>Lachnospiraceae</taxon>
        <taxon>Lachnospira</taxon>
    </lineage>
</organism>
<gene>
    <name evidence="1" type="primary">rpsS</name>
    <name type="ordered locus">EUBELI_00303</name>
</gene>
<protein>
    <recommendedName>
        <fullName evidence="1">Small ribosomal subunit protein uS19</fullName>
    </recommendedName>
    <alternativeName>
        <fullName evidence="2">30S ribosomal protein S19</fullName>
    </alternativeName>
</protein>
<keyword id="KW-1185">Reference proteome</keyword>
<keyword id="KW-0687">Ribonucleoprotein</keyword>
<keyword id="KW-0689">Ribosomal protein</keyword>
<keyword id="KW-0694">RNA-binding</keyword>
<keyword id="KW-0699">rRNA-binding</keyword>
<feature type="chain" id="PRO_1000211804" description="Small ribosomal subunit protein uS19">
    <location>
        <begin position="1"/>
        <end position="91"/>
    </location>
</feature>
<comment type="function">
    <text evidence="1">Protein S19 forms a complex with S13 that binds strongly to the 16S ribosomal RNA.</text>
</comment>
<comment type="similarity">
    <text evidence="1">Belongs to the universal ribosomal protein uS19 family.</text>
</comment>
<reference key="1">
    <citation type="journal article" date="2009" name="Proc. Natl. Acad. Sci. U.S.A.">
        <title>Characterizing a model human gut microbiota composed of members of its two dominant bacterial phyla.</title>
        <authorList>
            <person name="Mahowald M.A."/>
            <person name="Rey F.E."/>
            <person name="Seedorf H."/>
            <person name="Turnbaugh P.J."/>
            <person name="Fulton R.S."/>
            <person name="Wollam A."/>
            <person name="Shah N."/>
            <person name="Wang C."/>
            <person name="Magrini V."/>
            <person name="Wilson R.K."/>
            <person name="Cantarel B.L."/>
            <person name="Coutinho P.M."/>
            <person name="Henrissat B."/>
            <person name="Crock L.W."/>
            <person name="Russell A."/>
            <person name="Verberkmoes N.C."/>
            <person name="Hettich R.L."/>
            <person name="Gordon J.I."/>
        </authorList>
    </citation>
    <scope>NUCLEOTIDE SEQUENCE [LARGE SCALE GENOMIC DNA]</scope>
    <source>
        <strain>ATCC 27750 / DSM 3376 / VPI C15-48 / C15-B4</strain>
    </source>
</reference>
<name>RS19_LACE2</name>
<dbReference type="EMBL" id="CP001104">
    <property type="protein sequence ID" value="ACR71339.1"/>
    <property type="molecule type" value="Genomic_DNA"/>
</dbReference>
<dbReference type="RefSeq" id="WP_012738576.1">
    <property type="nucleotide sequence ID" value="NC_012778.1"/>
</dbReference>
<dbReference type="SMR" id="C4Z2T4"/>
<dbReference type="STRING" id="515620.EUBELI_00303"/>
<dbReference type="GeneID" id="41355076"/>
<dbReference type="KEGG" id="eel:EUBELI_00303"/>
<dbReference type="eggNOG" id="COG0185">
    <property type="taxonomic scope" value="Bacteria"/>
</dbReference>
<dbReference type="HOGENOM" id="CLU_144911_0_1_9"/>
<dbReference type="Proteomes" id="UP000001476">
    <property type="component" value="Chromosome"/>
</dbReference>
<dbReference type="GO" id="GO:0005737">
    <property type="term" value="C:cytoplasm"/>
    <property type="evidence" value="ECO:0007669"/>
    <property type="project" value="UniProtKB-ARBA"/>
</dbReference>
<dbReference type="GO" id="GO:0015935">
    <property type="term" value="C:small ribosomal subunit"/>
    <property type="evidence" value="ECO:0007669"/>
    <property type="project" value="InterPro"/>
</dbReference>
<dbReference type="GO" id="GO:0019843">
    <property type="term" value="F:rRNA binding"/>
    <property type="evidence" value="ECO:0007669"/>
    <property type="project" value="UniProtKB-UniRule"/>
</dbReference>
<dbReference type="GO" id="GO:0003735">
    <property type="term" value="F:structural constituent of ribosome"/>
    <property type="evidence" value="ECO:0007669"/>
    <property type="project" value="InterPro"/>
</dbReference>
<dbReference type="GO" id="GO:0000028">
    <property type="term" value="P:ribosomal small subunit assembly"/>
    <property type="evidence" value="ECO:0007669"/>
    <property type="project" value="TreeGrafter"/>
</dbReference>
<dbReference type="GO" id="GO:0006412">
    <property type="term" value="P:translation"/>
    <property type="evidence" value="ECO:0007669"/>
    <property type="project" value="UniProtKB-UniRule"/>
</dbReference>
<dbReference type="FunFam" id="3.30.860.10:FF:000001">
    <property type="entry name" value="30S ribosomal protein S19"/>
    <property type="match status" value="1"/>
</dbReference>
<dbReference type="Gene3D" id="3.30.860.10">
    <property type="entry name" value="30s Ribosomal Protein S19, Chain A"/>
    <property type="match status" value="1"/>
</dbReference>
<dbReference type="HAMAP" id="MF_00531">
    <property type="entry name" value="Ribosomal_uS19"/>
    <property type="match status" value="1"/>
</dbReference>
<dbReference type="InterPro" id="IPR002222">
    <property type="entry name" value="Ribosomal_uS19"/>
</dbReference>
<dbReference type="InterPro" id="IPR005732">
    <property type="entry name" value="Ribosomal_uS19_bac-type"/>
</dbReference>
<dbReference type="InterPro" id="IPR020934">
    <property type="entry name" value="Ribosomal_uS19_CS"/>
</dbReference>
<dbReference type="InterPro" id="IPR023575">
    <property type="entry name" value="Ribosomal_uS19_SF"/>
</dbReference>
<dbReference type="NCBIfam" id="TIGR01050">
    <property type="entry name" value="rpsS_bact"/>
    <property type="match status" value="1"/>
</dbReference>
<dbReference type="PANTHER" id="PTHR11880">
    <property type="entry name" value="RIBOSOMAL PROTEIN S19P FAMILY MEMBER"/>
    <property type="match status" value="1"/>
</dbReference>
<dbReference type="PANTHER" id="PTHR11880:SF8">
    <property type="entry name" value="SMALL RIBOSOMAL SUBUNIT PROTEIN US19M"/>
    <property type="match status" value="1"/>
</dbReference>
<dbReference type="Pfam" id="PF00203">
    <property type="entry name" value="Ribosomal_S19"/>
    <property type="match status" value="1"/>
</dbReference>
<dbReference type="PIRSF" id="PIRSF002144">
    <property type="entry name" value="Ribosomal_S19"/>
    <property type="match status" value="1"/>
</dbReference>
<dbReference type="PRINTS" id="PR00975">
    <property type="entry name" value="RIBOSOMALS19"/>
</dbReference>
<dbReference type="SUPFAM" id="SSF54570">
    <property type="entry name" value="Ribosomal protein S19"/>
    <property type="match status" value="1"/>
</dbReference>
<dbReference type="PROSITE" id="PS00323">
    <property type="entry name" value="RIBOSOMAL_S19"/>
    <property type="match status" value="1"/>
</dbReference>
<sequence>MARSLKKGAFADESLLKKVDALNAANDKQVIKTWSRRSTIYPQFVGHTIAVHDGRKHVPVYVTEDMVGHKLGEFVATRTYRGHGKDEKKSR</sequence>
<proteinExistence type="inferred from homology"/>